<comment type="function">
    <text>This enzyme has both RNase and DNase activity.</text>
</comment>
<comment type="cofactor">
    <cofactor>
        <name>Mg(2+)</name>
        <dbReference type="ChEBI" id="CHEBI:18420"/>
    </cofactor>
    <cofactor>
        <name>Mn(2+)</name>
        <dbReference type="ChEBI" id="CHEBI:29035"/>
    </cofactor>
</comment>
<comment type="subcellular location">
    <subcellularLocation>
        <location>Secreted</location>
    </subcellularLocation>
</comment>
<comment type="miscellaneous">
    <text evidence="1">The active site contains 1 hydrated divalent metal cation that has only 1 direct interaction with the protein; all other interactions are via water molecules.</text>
</comment>
<comment type="similarity">
    <text evidence="3">Belongs to the DNA/RNA non-specific endonuclease family.</text>
</comment>
<evidence type="ECO:0000250" key="1"/>
<evidence type="ECO:0000255" key="2">
    <source>
        <dbReference type="PROSITE-ProRule" id="PRU10047"/>
    </source>
</evidence>
<evidence type="ECO:0000305" key="3"/>
<feature type="chain" id="PRO_0000178671" description="Nuclease C1">
    <location>
        <begin position="1"/>
        <end position="252"/>
    </location>
</feature>
<feature type="active site" description="Proton acceptor" evidence="2">
    <location>
        <position position="87"/>
    </location>
</feature>
<feature type="binding site" evidence="1">
    <location>
        <position position="119"/>
    </location>
    <ligand>
        <name>Mg(2+)</name>
        <dbReference type="ChEBI" id="CHEBI:18420"/>
        <note>catalytic</note>
    </ligand>
</feature>
<dbReference type="EC" id="3.1.30.-"/>
<dbReference type="EMBL" id="AF043517">
    <property type="protein sequence ID" value="AAC78769.2"/>
    <property type="molecule type" value="mRNA"/>
</dbReference>
<dbReference type="SMR" id="P81203"/>
<dbReference type="GO" id="GO:0005576">
    <property type="term" value="C:extracellular region"/>
    <property type="evidence" value="ECO:0007669"/>
    <property type="project" value="UniProtKB-SubCell"/>
</dbReference>
<dbReference type="GO" id="GO:0005743">
    <property type="term" value="C:mitochondrial inner membrane"/>
    <property type="evidence" value="ECO:0007669"/>
    <property type="project" value="TreeGrafter"/>
</dbReference>
<dbReference type="GO" id="GO:0005634">
    <property type="term" value="C:nucleus"/>
    <property type="evidence" value="ECO:0007669"/>
    <property type="project" value="TreeGrafter"/>
</dbReference>
<dbReference type="GO" id="GO:0046872">
    <property type="term" value="F:metal ion binding"/>
    <property type="evidence" value="ECO:0007669"/>
    <property type="project" value="UniProtKB-KW"/>
</dbReference>
<dbReference type="GO" id="GO:0003676">
    <property type="term" value="F:nucleic acid binding"/>
    <property type="evidence" value="ECO:0007669"/>
    <property type="project" value="InterPro"/>
</dbReference>
<dbReference type="GO" id="GO:0004521">
    <property type="term" value="F:RNA endonuclease activity"/>
    <property type="evidence" value="ECO:0007669"/>
    <property type="project" value="TreeGrafter"/>
</dbReference>
<dbReference type="GO" id="GO:0000014">
    <property type="term" value="F:single-stranded DNA endodeoxyribonuclease activity"/>
    <property type="evidence" value="ECO:0007669"/>
    <property type="project" value="TreeGrafter"/>
</dbReference>
<dbReference type="GO" id="GO:0006309">
    <property type="term" value="P:apoptotic DNA fragmentation"/>
    <property type="evidence" value="ECO:0007669"/>
    <property type="project" value="TreeGrafter"/>
</dbReference>
<dbReference type="CDD" id="cd00091">
    <property type="entry name" value="NUC"/>
    <property type="match status" value="1"/>
</dbReference>
<dbReference type="Gene3D" id="3.40.570.10">
    <property type="entry name" value="Extracellular Endonuclease, subunit A"/>
    <property type="match status" value="1"/>
</dbReference>
<dbReference type="InterPro" id="IPR018524">
    <property type="entry name" value="DNA/RNA_endonuclease_AS"/>
</dbReference>
<dbReference type="InterPro" id="IPR044929">
    <property type="entry name" value="DNA/RNA_non-sp_Endonuclease_sf"/>
</dbReference>
<dbReference type="InterPro" id="IPR001604">
    <property type="entry name" value="Endo_G_ENPP1-like_dom"/>
</dbReference>
<dbReference type="InterPro" id="IPR020821">
    <property type="entry name" value="ENPP1-3/EXOG-like_nuc-like"/>
</dbReference>
<dbReference type="InterPro" id="IPR044925">
    <property type="entry name" value="His-Me_finger_sf"/>
</dbReference>
<dbReference type="InterPro" id="IPR040255">
    <property type="entry name" value="Non-specific_endonuclease"/>
</dbReference>
<dbReference type="PANTHER" id="PTHR13966:SF5">
    <property type="entry name" value="ENDONUCLEASE G, MITOCHONDRIAL"/>
    <property type="match status" value="1"/>
</dbReference>
<dbReference type="PANTHER" id="PTHR13966">
    <property type="entry name" value="ENDONUCLEASE RELATED"/>
    <property type="match status" value="1"/>
</dbReference>
<dbReference type="Pfam" id="PF01223">
    <property type="entry name" value="Endonuclease_NS"/>
    <property type="match status" value="1"/>
</dbReference>
<dbReference type="SMART" id="SM00892">
    <property type="entry name" value="Endonuclease_NS"/>
    <property type="match status" value="1"/>
</dbReference>
<dbReference type="SMART" id="SM00477">
    <property type="entry name" value="NUC"/>
    <property type="match status" value="1"/>
</dbReference>
<dbReference type="SUPFAM" id="SSF54060">
    <property type="entry name" value="His-Me finger endonucleases"/>
    <property type="match status" value="1"/>
</dbReference>
<dbReference type="PROSITE" id="PS01070">
    <property type="entry name" value="NUCLEASE_NON_SPEC"/>
    <property type="match status" value="1"/>
</dbReference>
<sequence>SPNSESILQFGDPGTARDFLERESYVISYNRRDRVASWTGEHLTADSLKTGDGVDRDHSKFKEDPDVPSLFRSTLADYSGSGFDRGHMAPAGDAVATQPAMDQTFYLSNMSPQVGIGFNRHYWAYLEGFCRSLTKKFSDVYVFTGPLFLPTKGSDGKYTVTYNVLQGNVAVPTHFYKVILVPQGDNKYAYGAFILPNQAIDTKTPLTNFKVKLTDVEKASGLTFFDKLDVSTLGDLCAATTCAVSSSGGGDA</sequence>
<protein>
    <recommendedName>
        <fullName>Nuclease C1</fullName>
        <ecNumber>3.1.30.-</ecNumber>
    </recommendedName>
</protein>
<organism>
    <name type="scientific">Cunninghamella echinulata var. echinulata</name>
    <dbReference type="NCBI Taxonomy" id="76406"/>
    <lineage>
        <taxon>Eukaryota</taxon>
        <taxon>Fungi</taxon>
        <taxon>Fungi incertae sedis</taxon>
        <taxon>Mucoromycota</taxon>
        <taxon>Mucoromycotina</taxon>
        <taxon>Mucoromycetes</taxon>
        <taxon>Mucorales</taxon>
        <taxon>Cunninghamellaceae</taxon>
        <taxon>Cunninghamella</taxon>
    </lineage>
</organism>
<gene>
    <name type="primary">NUC1CE</name>
</gene>
<reference key="1">
    <citation type="journal article" date="1998" name="Eur. J. Biochem.">
        <title>Purification, characterization and complete amino acid sequence of nuclease C1 from Cunninghamella echinulata var. echinulata.</title>
        <authorList>
            <person name="Ho H.-C."/>
            <person name="Liu F.-C."/>
            <person name="Chung J.-G."/>
            <person name="Chen L.-Y."/>
        </authorList>
    </citation>
    <scope>NUCLEOTIDE SEQUENCE [MRNA] OF 15-252</scope>
    <scope>PROTEIN SEQUENCE OF 1-49</scope>
    <source>
        <strain>ATCC 36190 / DSM 1905 / NRRL 3655</strain>
    </source>
</reference>
<keyword id="KW-0903">Direct protein sequencing</keyword>
<keyword id="KW-0255">Endonuclease</keyword>
<keyword id="KW-0378">Hydrolase</keyword>
<keyword id="KW-0460">Magnesium</keyword>
<keyword id="KW-0464">Manganese</keyword>
<keyword id="KW-0479">Metal-binding</keyword>
<keyword id="KW-0540">Nuclease</keyword>
<keyword id="KW-0964">Secreted</keyword>
<proteinExistence type="evidence at protein level"/>
<accession>P81203</accession>
<name>NUC1_CUNEE</name>